<gene>
    <name type="primary">RPS19</name>
</gene>
<feature type="chain" id="PRO_0000153820" description="Small ribosomal subunit protein eS19">
    <location>
        <begin position="1"/>
        <end position="149"/>
    </location>
</feature>
<accession>Q94613</accession>
<evidence type="ECO:0000305" key="1"/>
<organism>
    <name type="scientific">Mya arenaria</name>
    <name type="common">Soft-shell clam</name>
    <dbReference type="NCBI Taxonomy" id="6604"/>
    <lineage>
        <taxon>Eukaryota</taxon>
        <taxon>Metazoa</taxon>
        <taxon>Spiralia</taxon>
        <taxon>Lophotrochozoa</taxon>
        <taxon>Mollusca</taxon>
        <taxon>Bivalvia</taxon>
        <taxon>Autobranchia</taxon>
        <taxon>Heteroconchia</taxon>
        <taxon>Euheterodonta</taxon>
        <taxon>Imparidentia</taxon>
        <taxon>Neoheterodontei</taxon>
        <taxon>Myida</taxon>
        <taxon>Myoidea</taxon>
        <taxon>Myidae</taxon>
        <taxon>Mya</taxon>
    </lineage>
</organism>
<reference key="1">
    <citation type="journal article" date="1997" name="Gene">
        <title>Isolation of the cDNA and characterization of mRNA expression of ribosomal protein S19 from the soft-shell clam, Mya arenaria.</title>
        <authorList>
            <person name="Rhodes L.D."/>
            <person name="van Beneden R.J."/>
        </authorList>
    </citation>
    <scope>NUCLEOTIDE SEQUENCE [MRNA]</scope>
</reference>
<proteinExistence type="evidence at transcript level"/>
<keyword id="KW-0687">Ribonucleoprotein</keyword>
<keyword id="KW-0689">Ribosomal protein</keyword>
<protein>
    <recommendedName>
        <fullName evidence="1">Small ribosomal subunit protein eS19</fullName>
    </recommendedName>
    <alternativeName>
        <fullName>40S ribosomal protein S19</fullName>
    </alternativeName>
</protein>
<sequence>MGISVKDVSSHEFTRAFAAFLKKSGKMKVPEWTDFVKTGMFKELSPYEPDWYFIRAASICRHLYIRSPAGIGSFEKIYGGRRRRGTAPSHFCKANGSISRRLLQSLEGLKIVEKDPNGGRRLTSQGRRDLDRIAAQIAPKRAPSAPKTV</sequence>
<name>RS19_MYAAR</name>
<comment type="similarity">
    <text evidence="1">Belongs to the eukaryotic ribosomal protein eS19 family.</text>
</comment>
<dbReference type="EMBL" id="U63092">
    <property type="protein sequence ID" value="AAB09536.1"/>
    <property type="molecule type" value="mRNA"/>
</dbReference>
<dbReference type="PIR" id="T09674">
    <property type="entry name" value="T09674"/>
</dbReference>
<dbReference type="SMR" id="Q94613"/>
<dbReference type="EnsemblMetazoa" id="XM_052949149.1">
    <property type="protein sequence ID" value="XP_052805109.1"/>
    <property type="gene ID" value="LOC128234720"/>
</dbReference>
<dbReference type="OMA" id="WAPFVKT"/>
<dbReference type="OrthoDB" id="428974at2759"/>
<dbReference type="GO" id="GO:0022627">
    <property type="term" value="C:cytosolic small ribosomal subunit"/>
    <property type="evidence" value="ECO:0007669"/>
    <property type="project" value="TreeGrafter"/>
</dbReference>
<dbReference type="GO" id="GO:0003723">
    <property type="term" value="F:RNA binding"/>
    <property type="evidence" value="ECO:0007669"/>
    <property type="project" value="TreeGrafter"/>
</dbReference>
<dbReference type="GO" id="GO:0003735">
    <property type="term" value="F:structural constituent of ribosome"/>
    <property type="evidence" value="ECO:0007669"/>
    <property type="project" value="InterPro"/>
</dbReference>
<dbReference type="GO" id="GO:0000028">
    <property type="term" value="P:ribosomal small subunit assembly"/>
    <property type="evidence" value="ECO:0007669"/>
    <property type="project" value="TreeGrafter"/>
</dbReference>
<dbReference type="GO" id="GO:0006412">
    <property type="term" value="P:translation"/>
    <property type="evidence" value="ECO:0007669"/>
    <property type="project" value="InterPro"/>
</dbReference>
<dbReference type="FunFam" id="1.10.10.10:FF:000118">
    <property type="entry name" value="40S ribosomal protein S19"/>
    <property type="match status" value="1"/>
</dbReference>
<dbReference type="Gene3D" id="1.10.10.10">
    <property type="entry name" value="Winged helix-like DNA-binding domain superfamily/Winged helix DNA-binding domain"/>
    <property type="match status" value="1"/>
</dbReference>
<dbReference type="InterPro" id="IPR001266">
    <property type="entry name" value="Ribosomal_eS19"/>
</dbReference>
<dbReference type="InterPro" id="IPR018277">
    <property type="entry name" value="Ribosomal_eS19_CS"/>
</dbReference>
<dbReference type="InterPro" id="IPR036388">
    <property type="entry name" value="WH-like_DNA-bd_sf"/>
</dbReference>
<dbReference type="InterPro" id="IPR036390">
    <property type="entry name" value="WH_DNA-bd_sf"/>
</dbReference>
<dbReference type="PANTHER" id="PTHR11710">
    <property type="entry name" value="40S RIBOSOMAL PROTEIN S19"/>
    <property type="match status" value="1"/>
</dbReference>
<dbReference type="PANTHER" id="PTHR11710:SF0">
    <property type="entry name" value="40S RIBOSOMAL PROTEIN S19"/>
    <property type="match status" value="1"/>
</dbReference>
<dbReference type="Pfam" id="PF01090">
    <property type="entry name" value="Ribosomal_S19e"/>
    <property type="match status" value="1"/>
</dbReference>
<dbReference type="SMART" id="SM01413">
    <property type="entry name" value="Ribosomal_S19e"/>
    <property type="match status" value="1"/>
</dbReference>
<dbReference type="SUPFAM" id="SSF46785">
    <property type="entry name" value="Winged helix' DNA-binding domain"/>
    <property type="match status" value="1"/>
</dbReference>
<dbReference type="PROSITE" id="PS00628">
    <property type="entry name" value="RIBOSOMAL_S19E"/>
    <property type="match status" value="1"/>
</dbReference>